<reference key="1">
    <citation type="journal article" date="1995" name="Gene">
        <title>Genes encoding RubisCO in Pseudomonas hydrogenothermophila are followed by a novel cbbQ gene similar to nirQ of the denitrification gene cluster from Pseudomonas species.</title>
        <authorList>
            <person name="Yokoyama K."/>
            <person name="Hayashi N.R."/>
            <person name="Arai H."/>
            <person name="Chung S.Y."/>
            <person name="Igarashi Y."/>
            <person name="Kodama T."/>
        </authorList>
    </citation>
    <scope>NUCLEOTIDE SEQUENCE [GENOMIC DNA]</scope>
    <source>
        <strain>TH-1 / NBRC 14978</strain>
    </source>
</reference>
<comment type="function">
    <text evidence="1">RuBisCO catalyzes two reactions: the carboxylation of D-ribulose 1,5-bisphosphate, the primary event in carbon dioxide fixation, as well as the oxidative fragmentation of the pentose substrate. Both reactions occur simultaneously and in competition at the same active site.</text>
</comment>
<comment type="catalytic activity">
    <reaction evidence="1">
        <text>2 (2R)-3-phosphoglycerate + 2 H(+) = D-ribulose 1,5-bisphosphate + CO2 + H2O</text>
        <dbReference type="Rhea" id="RHEA:23124"/>
        <dbReference type="ChEBI" id="CHEBI:15377"/>
        <dbReference type="ChEBI" id="CHEBI:15378"/>
        <dbReference type="ChEBI" id="CHEBI:16526"/>
        <dbReference type="ChEBI" id="CHEBI:57870"/>
        <dbReference type="ChEBI" id="CHEBI:58272"/>
        <dbReference type="EC" id="4.1.1.39"/>
    </reaction>
</comment>
<comment type="catalytic activity">
    <reaction evidence="1">
        <text>D-ribulose 1,5-bisphosphate + O2 = 2-phosphoglycolate + (2R)-3-phosphoglycerate + 2 H(+)</text>
        <dbReference type="Rhea" id="RHEA:36631"/>
        <dbReference type="ChEBI" id="CHEBI:15378"/>
        <dbReference type="ChEBI" id="CHEBI:15379"/>
        <dbReference type="ChEBI" id="CHEBI:57870"/>
        <dbReference type="ChEBI" id="CHEBI:58033"/>
        <dbReference type="ChEBI" id="CHEBI:58272"/>
    </reaction>
</comment>
<comment type="cofactor">
    <cofactor evidence="1">
        <name>Mg(2+)</name>
        <dbReference type="ChEBI" id="CHEBI:18420"/>
    </cofactor>
    <text evidence="1">Binds 1 Mg(2+) ion per subunit.</text>
</comment>
<comment type="subunit">
    <text evidence="1">Heterohexadecamer of 8 large chains and 8 small chains.</text>
</comment>
<comment type="miscellaneous">
    <text evidence="1">The basic functional RuBisCO is composed of a large chain homodimer in a 'head-to-tail' conformation. In form I RuBisCO this homodimer is arranged in a barrel-like tetramer with the small subunits forming a tetrameric 'cap' on each end of the 'barrel'.</text>
</comment>
<comment type="similarity">
    <text evidence="1">Belongs to the RuBisCO large chain family. Type I subfamily.</text>
</comment>
<accession>Q51856</accession>
<name>RBL_HYDTE</name>
<sequence length="474" mass="53286">MSQPKRYEAGVKEYRETYWEPTYVPKDSDFLAVFKIVPQPGVPREESAAAVAAESSTATWTTVWTDLLTDLYYYKGRAYAIEDVPGDDEAFYAFIAYPMGLFEEGSVVNVFTSLVGNVFGFKAVRSLRLEDVRIPLWFVTTCPGPPHGIYVERDKLNKYGRPLLGCTIKPKLGLSAKNYGRAVYECLRGGLDFTKDDENVNSQPFMRWRDRFLFCQEAIEKAQAETGERKGHYMNVTGPTMEEIYKRAEFAKEIGTPIIMIDYLTVGWAATQSLSKWCRDNGMLLHVHRAMHAVIDRNPKHGINFRVLAKIMRLIGGDHLHSGTVVGKLEGDRAATLGWIDLMRDRYVKADRSRGIFFDQDWGQMPGMFPVASGGIHVWHMPALVSIFGDDSVLQFGGGTIGHPWGNAAGACANRVALEACVKARNEGLPIEKMGREILTEAAKSCPELKVAMETWKEVKFDFDTVDKLDVQHR</sequence>
<dbReference type="EC" id="4.1.1.39" evidence="1"/>
<dbReference type="EMBL" id="D30764">
    <property type="protein sequence ID" value="BAA06437.1"/>
    <property type="molecule type" value="Genomic_DNA"/>
</dbReference>
<dbReference type="SMR" id="Q51856"/>
<dbReference type="GO" id="GO:0000287">
    <property type="term" value="F:magnesium ion binding"/>
    <property type="evidence" value="ECO:0007669"/>
    <property type="project" value="UniProtKB-UniRule"/>
</dbReference>
<dbReference type="GO" id="GO:0004497">
    <property type="term" value="F:monooxygenase activity"/>
    <property type="evidence" value="ECO:0007669"/>
    <property type="project" value="UniProtKB-KW"/>
</dbReference>
<dbReference type="GO" id="GO:0016984">
    <property type="term" value="F:ribulose-bisphosphate carboxylase activity"/>
    <property type="evidence" value="ECO:0007669"/>
    <property type="project" value="UniProtKB-UniRule"/>
</dbReference>
<dbReference type="GO" id="GO:0019253">
    <property type="term" value="P:reductive pentose-phosphate cycle"/>
    <property type="evidence" value="ECO:0007669"/>
    <property type="project" value="UniProtKB-UniRule"/>
</dbReference>
<dbReference type="Gene3D" id="3.20.20.110">
    <property type="entry name" value="Ribulose bisphosphate carboxylase, large subunit, C-terminal domain"/>
    <property type="match status" value="1"/>
</dbReference>
<dbReference type="Gene3D" id="3.30.70.150">
    <property type="entry name" value="RuBisCO large subunit, N-terminal domain"/>
    <property type="match status" value="1"/>
</dbReference>
<dbReference type="HAMAP" id="MF_01338">
    <property type="entry name" value="RuBisCO_L_type1"/>
    <property type="match status" value="1"/>
</dbReference>
<dbReference type="InterPro" id="IPR033966">
    <property type="entry name" value="RuBisCO"/>
</dbReference>
<dbReference type="InterPro" id="IPR020878">
    <property type="entry name" value="RuBisCo_large_chain_AS"/>
</dbReference>
<dbReference type="InterPro" id="IPR000685">
    <property type="entry name" value="RuBisCO_lsu_C"/>
</dbReference>
<dbReference type="InterPro" id="IPR036376">
    <property type="entry name" value="RuBisCO_lsu_C_sf"/>
</dbReference>
<dbReference type="InterPro" id="IPR017443">
    <property type="entry name" value="RuBisCO_lsu_fd_N"/>
</dbReference>
<dbReference type="InterPro" id="IPR036422">
    <property type="entry name" value="RuBisCO_lsu_N_sf"/>
</dbReference>
<dbReference type="InterPro" id="IPR020888">
    <property type="entry name" value="RuBisCO_lsuI"/>
</dbReference>
<dbReference type="NCBIfam" id="NF003252">
    <property type="entry name" value="PRK04208.1"/>
    <property type="match status" value="1"/>
</dbReference>
<dbReference type="PANTHER" id="PTHR42704">
    <property type="entry name" value="RIBULOSE BISPHOSPHATE CARBOXYLASE"/>
    <property type="match status" value="1"/>
</dbReference>
<dbReference type="PANTHER" id="PTHR42704:SF17">
    <property type="entry name" value="RIBULOSE BISPHOSPHATE CARBOXYLASE LARGE CHAIN"/>
    <property type="match status" value="1"/>
</dbReference>
<dbReference type="Pfam" id="PF00016">
    <property type="entry name" value="RuBisCO_large"/>
    <property type="match status" value="1"/>
</dbReference>
<dbReference type="Pfam" id="PF02788">
    <property type="entry name" value="RuBisCO_large_N"/>
    <property type="match status" value="1"/>
</dbReference>
<dbReference type="SFLD" id="SFLDG01052">
    <property type="entry name" value="RuBisCO"/>
    <property type="match status" value="1"/>
</dbReference>
<dbReference type="SFLD" id="SFLDS00014">
    <property type="entry name" value="RuBisCO"/>
    <property type="match status" value="1"/>
</dbReference>
<dbReference type="SFLD" id="SFLDG00301">
    <property type="entry name" value="RuBisCO-like_proteins"/>
    <property type="match status" value="1"/>
</dbReference>
<dbReference type="SUPFAM" id="SSF51649">
    <property type="entry name" value="RuBisCo, C-terminal domain"/>
    <property type="match status" value="1"/>
</dbReference>
<dbReference type="SUPFAM" id="SSF54966">
    <property type="entry name" value="RuBisCO, large subunit, small (N-terminal) domain"/>
    <property type="match status" value="1"/>
</dbReference>
<dbReference type="PROSITE" id="PS00157">
    <property type="entry name" value="RUBISCO_LARGE"/>
    <property type="match status" value="1"/>
</dbReference>
<organism>
    <name type="scientific">Hydrogenophilus thermoluteolus</name>
    <name type="common">Pseudomonas hydrogenothermophila</name>
    <dbReference type="NCBI Taxonomy" id="297"/>
    <lineage>
        <taxon>Bacteria</taxon>
        <taxon>Pseudomonadati</taxon>
        <taxon>Pseudomonadota</taxon>
        <taxon>Hydrogenophilia</taxon>
        <taxon>Hydrogenophilales</taxon>
        <taxon>Hydrogenophilaceae</taxon>
        <taxon>Hydrogenophilus</taxon>
    </lineage>
</organism>
<gene>
    <name evidence="1" type="primary">cbbL</name>
</gene>
<feature type="chain" id="PRO_0000062640" description="Ribulose bisphosphate carboxylase large chain">
    <location>
        <begin position="1"/>
        <end position="474"/>
    </location>
</feature>
<feature type="active site" description="Proton acceptor" evidence="1">
    <location>
        <position position="169"/>
    </location>
</feature>
<feature type="active site" description="Proton acceptor" evidence="1">
    <location>
        <position position="288"/>
    </location>
</feature>
<feature type="binding site" description="in homodimeric partner" evidence="1">
    <location>
        <position position="117"/>
    </location>
    <ligand>
        <name>substrate</name>
    </ligand>
</feature>
<feature type="binding site" evidence="1">
    <location>
        <position position="167"/>
    </location>
    <ligand>
        <name>substrate</name>
    </ligand>
</feature>
<feature type="binding site" evidence="1">
    <location>
        <position position="171"/>
    </location>
    <ligand>
        <name>substrate</name>
    </ligand>
</feature>
<feature type="binding site" description="via carbamate group" evidence="1">
    <location>
        <position position="195"/>
    </location>
    <ligand>
        <name>Mg(2+)</name>
        <dbReference type="ChEBI" id="CHEBI:18420"/>
    </ligand>
</feature>
<feature type="binding site" evidence="1">
    <location>
        <position position="197"/>
    </location>
    <ligand>
        <name>Mg(2+)</name>
        <dbReference type="ChEBI" id="CHEBI:18420"/>
    </ligand>
</feature>
<feature type="binding site" evidence="1">
    <location>
        <position position="198"/>
    </location>
    <ligand>
        <name>Mg(2+)</name>
        <dbReference type="ChEBI" id="CHEBI:18420"/>
    </ligand>
</feature>
<feature type="binding site" evidence="1">
    <location>
        <position position="289"/>
    </location>
    <ligand>
        <name>substrate</name>
    </ligand>
</feature>
<feature type="binding site" evidence="1">
    <location>
        <position position="321"/>
    </location>
    <ligand>
        <name>substrate</name>
    </ligand>
</feature>
<feature type="binding site" evidence="1">
    <location>
        <position position="373"/>
    </location>
    <ligand>
        <name>substrate</name>
    </ligand>
</feature>
<feature type="site" description="Transition state stabilizer" evidence="1">
    <location>
        <position position="328"/>
    </location>
</feature>
<feature type="modified residue" description="N6-carboxylysine" evidence="1">
    <location>
        <position position="195"/>
    </location>
</feature>
<protein>
    <recommendedName>
        <fullName evidence="1">Ribulose bisphosphate carboxylase large chain</fullName>
        <shortName evidence="1">RuBisCO large subunit</shortName>
        <ecNumber evidence="1">4.1.1.39</ecNumber>
    </recommendedName>
</protein>
<keyword id="KW-0113">Calvin cycle</keyword>
<keyword id="KW-0120">Carbon dioxide fixation</keyword>
<keyword id="KW-0456">Lyase</keyword>
<keyword id="KW-0460">Magnesium</keyword>
<keyword id="KW-0479">Metal-binding</keyword>
<keyword id="KW-0503">Monooxygenase</keyword>
<keyword id="KW-0560">Oxidoreductase</keyword>
<evidence type="ECO:0000255" key="1">
    <source>
        <dbReference type="HAMAP-Rule" id="MF_01338"/>
    </source>
</evidence>
<proteinExistence type="inferred from homology"/>